<proteinExistence type="evidence at transcript level"/>
<keyword id="KW-1015">Disulfide bond</keyword>
<keyword id="KW-0964">Secreted</keyword>
<keyword id="KW-0732">Signal</keyword>
<keyword id="KW-0800">Toxin</keyword>
<feature type="signal peptide" evidence="2">
    <location>
        <begin position="1"/>
        <end position="20"/>
    </location>
</feature>
<feature type="propeptide" id="PRO_0000401777" evidence="1">
    <location>
        <begin position="21"/>
        <end position="26"/>
    </location>
</feature>
<feature type="chain" id="PRO_0000401778" description="U8-lycotoxin-Ls1t">
    <location>
        <begin position="27"/>
        <end position="77"/>
    </location>
</feature>
<evidence type="ECO:0000250" key="1"/>
<evidence type="ECO:0000255" key="2"/>
<evidence type="ECO:0000305" key="3"/>
<reference key="1">
    <citation type="journal article" date="2010" name="Zoology">
        <title>Transcriptome analysis of the venom glands of the Chinese wolf spider Lycosa singoriensis.</title>
        <authorList>
            <person name="Zhang Y."/>
            <person name="Chen J."/>
            <person name="Tang X."/>
            <person name="Wang F."/>
            <person name="Jiang L."/>
            <person name="Xiong X."/>
            <person name="Wang M."/>
            <person name="Rong M."/>
            <person name="Liu Z."/>
            <person name="Liang S."/>
        </authorList>
    </citation>
    <scope>NUCLEOTIDE SEQUENCE [LARGE SCALE MRNA]</scope>
    <source>
        <tissue>Venom gland</tissue>
    </source>
</reference>
<organism>
    <name type="scientific">Lycosa singoriensis</name>
    <name type="common">Wolf spider</name>
    <name type="synonym">Aranea singoriensis</name>
    <dbReference type="NCBI Taxonomy" id="434756"/>
    <lineage>
        <taxon>Eukaryota</taxon>
        <taxon>Metazoa</taxon>
        <taxon>Ecdysozoa</taxon>
        <taxon>Arthropoda</taxon>
        <taxon>Chelicerata</taxon>
        <taxon>Arachnida</taxon>
        <taxon>Araneae</taxon>
        <taxon>Araneomorphae</taxon>
        <taxon>Entelegynae</taxon>
        <taxon>Lycosoidea</taxon>
        <taxon>Lycosidae</taxon>
        <taxon>Lycosa</taxon>
    </lineage>
</organism>
<protein>
    <recommendedName>
        <fullName>U8-lycotoxin-Ls1t</fullName>
    </recommendedName>
    <alternativeName>
        <fullName>Toxin-like structure LSTX-H7</fullName>
    </alternativeName>
</protein>
<accession>B6DCX8</accession>
<name>TX807_LYCSI</name>
<dbReference type="EMBL" id="EU926062">
    <property type="protein sequence ID" value="ACI41394.1"/>
    <property type="molecule type" value="mRNA"/>
</dbReference>
<dbReference type="EMBL" id="FM864066">
    <property type="protein sequence ID" value="CAS03663.1"/>
    <property type="molecule type" value="mRNA"/>
</dbReference>
<dbReference type="SMR" id="B6DCX8"/>
<dbReference type="ArachnoServer" id="AS001001">
    <property type="toxin name" value="U8-lycotoxin-Ls1t"/>
</dbReference>
<dbReference type="GO" id="GO:0005576">
    <property type="term" value="C:extracellular region"/>
    <property type="evidence" value="ECO:0007669"/>
    <property type="project" value="UniProtKB-SubCell"/>
</dbReference>
<dbReference type="GO" id="GO:0090729">
    <property type="term" value="F:toxin activity"/>
    <property type="evidence" value="ECO:0007669"/>
    <property type="project" value="UniProtKB-KW"/>
</dbReference>
<dbReference type="InterPro" id="IPR019553">
    <property type="entry name" value="Spider_toxin_CSTX_knottin"/>
</dbReference>
<dbReference type="Pfam" id="PF10530">
    <property type="entry name" value="Toxin_35"/>
    <property type="match status" value="1"/>
</dbReference>
<comment type="subcellular location">
    <subcellularLocation>
        <location evidence="1">Secreted</location>
    </subcellularLocation>
</comment>
<comment type="tissue specificity">
    <text>Expressed by the venom gland.</text>
</comment>
<comment type="PTM">
    <text evidence="1">Contains 4 disulfide bonds.</text>
</comment>
<comment type="similarity">
    <text evidence="3">Belongs to the neurotoxin 19 (CSTX) family. 08 (U8-Lctx) subfamily.</text>
</comment>
<sequence>MKLIIFTGLVPFAIVSLIEAQAENEKACLPQYQVCTDAPGNCCSNLVCDCYGRYKSGTRIGRNCFCLQKGVIYKREN</sequence>